<accession>P0ADB6</accession>
<accession>P56548</accession>
<evidence type="ECO:0000250" key="1"/>
<evidence type="ECO:0000255" key="2">
    <source>
        <dbReference type="PROSITE-ProRule" id="PRU00303"/>
    </source>
</evidence>
<evidence type="ECO:0000305" key="3"/>
<feature type="signal peptide" evidence="2">
    <location>
        <begin position="1"/>
        <end position="18"/>
    </location>
</feature>
<feature type="peptide" id="PRO_0000043190" description="Entericidin A">
    <location>
        <begin position="19"/>
        <end position="41"/>
    </location>
</feature>
<feature type="lipid moiety-binding region" description="N-palmitoyl cysteine" evidence="3">
    <location>
        <position position="19"/>
    </location>
</feature>
<feature type="lipid moiety-binding region" description="S-diacylglycerol cysteine" evidence="3">
    <location>
        <position position="19"/>
    </location>
</feature>
<gene>
    <name type="primary">ecnA</name>
    <name type="ordered locus">Z5753</name>
    <name type="ordered locus">ECs5128.1</name>
</gene>
<comment type="function">
    <text evidence="1">Acts as antidote to the effect of entericidin B.</text>
</comment>
<comment type="subcellular location">
    <subcellularLocation>
        <location evidence="2">Cell membrane</location>
        <topology evidence="2">Lipid-anchor</topology>
    </subcellularLocation>
</comment>
<comment type="similarity">
    <text evidence="3">Belongs to the EcnA/EcnB lipoprotein family.</text>
</comment>
<keyword id="KW-1003">Cell membrane</keyword>
<keyword id="KW-0449">Lipoprotein</keyword>
<keyword id="KW-0472">Membrane</keyword>
<keyword id="KW-0564">Palmitate</keyword>
<keyword id="KW-1185">Reference proteome</keyword>
<keyword id="KW-0732">Signal</keyword>
<sequence>MMKRLIVLVLLASTLLTGCNTARGFGEDIKHLGNSISRAAS</sequence>
<protein>
    <recommendedName>
        <fullName>Entericidin A</fullName>
    </recommendedName>
</protein>
<proteinExistence type="inferred from homology"/>
<dbReference type="EMBL" id="AE005174">
    <property type="protein sequence ID" value="AAG59347.1"/>
    <property type="molecule type" value="Genomic_DNA"/>
</dbReference>
<dbReference type="EMBL" id="BA000007">
    <property type="status" value="NOT_ANNOTATED_CDS"/>
    <property type="molecule type" value="Genomic_DNA"/>
</dbReference>
<dbReference type="PIR" id="G86110">
    <property type="entry name" value="G86110"/>
</dbReference>
<dbReference type="RefSeq" id="WP_000977757.1">
    <property type="nucleotide sequence ID" value="NZ_VOAI01000008.1"/>
</dbReference>
<dbReference type="STRING" id="155864.Z5753"/>
<dbReference type="GeneID" id="93777676"/>
<dbReference type="KEGG" id="ece:Z5753"/>
<dbReference type="PATRIC" id="fig|83334.175.peg.5687"/>
<dbReference type="eggNOG" id="COG5510">
    <property type="taxonomic scope" value="Bacteria"/>
</dbReference>
<dbReference type="Proteomes" id="UP000000558">
    <property type="component" value="Chromosome"/>
</dbReference>
<dbReference type="Proteomes" id="UP000002519">
    <property type="component" value="Chromosome"/>
</dbReference>
<dbReference type="GO" id="GO:0005886">
    <property type="term" value="C:plasma membrane"/>
    <property type="evidence" value="ECO:0007669"/>
    <property type="project" value="UniProtKB-SubCell"/>
</dbReference>
<dbReference type="GO" id="GO:0009636">
    <property type="term" value="P:response to toxic substance"/>
    <property type="evidence" value="ECO:0007669"/>
    <property type="project" value="InterPro"/>
</dbReference>
<dbReference type="InterPro" id="IPR012556">
    <property type="entry name" value="Entericidin"/>
</dbReference>
<dbReference type="NCBIfam" id="NF007319">
    <property type="entry name" value="PRK09810.1"/>
    <property type="match status" value="1"/>
</dbReference>
<dbReference type="Pfam" id="PF08085">
    <property type="entry name" value="Entericidin"/>
    <property type="match status" value="1"/>
</dbReference>
<dbReference type="PROSITE" id="PS51257">
    <property type="entry name" value="PROKAR_LIPOPROTEIN"/>
    <property type="match status" value="1"/>
</dbReference>
<reference key="1">
    <citation type="journal article" date="2001" name="Nature">
        <title>Genome sequence of enterohaemorrhagic Escherichia coli O157:H7.</title>
        <authorList>
            <person name="Perna N.T."/>
            <person name="Plunkett G. III"/>
            <person name="Burland V."/>
            <person name="Mau B."/>
            <person name="Glasner J.D."/>
            <person name="Rose D.J."/>
            <person name="Mayhew G.F."/>
            <person name="Evans P.S."/>
            <person name="Gregor J."/>
            <person name="Kirkpatrick H.A."/>
            <person name="Posfai G."/>
            <person name="Hackett J."/>
            <person name="Klink S."/>
            <person name="Boutin A."/>
            <person name="Shao Y."/>
            <person name="Miller L."/>
            <person name="Grotbeck E.J."/>
            <person name="Davis N.W."/>
            <person name="Lim A."/>
            <person name="Dimalanta E.T."/>
            <person name="Potamousis K."/>
            <person name="Apodaca J."/>
            <person name="Anantharaman T.S."/>
            <person name="Lin J."/>
            <person name="Yen G."/>
            <person name="Schwartz D.C."/>
            <person name="Welch R.A."/>
            <person name="Blattner F.R."/>
        </authorList>
    </citation>
    <scope>NUCLEOTIDE SEQUENCE [LARGE SCALE GENOMIC DNA]</scope>
    <source>
        <strain>O157:H7 / EDL933 / ATCC 700927 / EHEC</strain>
    </source>
</reference>
<reference key="2">
    <citation type="journal article" date="2001" name="DNA Res.">
        <title>Complete genome sequence of enterohemorrhagic Escherichia coli O157:H7 and genomic comparison with a laboratory strain K-12.</title>
        <authorList>
            <person name="Hayashi T."/>
            <person name="Makino K."/>
            <person name="Ohnishi M."/>
            <person name="Kurokawa K."/>
            <person name="Ishii K."/>
            <person name="Yokoyama K."/>
            <person name="Han C.-G."/>
            <person name="Ohtsubo E."/>
            <person name="Nakayama K."/>
            <person name="Murata T."/>
            <person name="Tanaka M."/>
            <person name="Tobe T."/>
            <person name="Iida T."/>
            <person name="Takami H."/>
            <person name="Honda T."/>
            <person name="Sasakawa C."/>
            <person name="Ogasawara N."/>
            <person name="Yasunaga T."/>
            <person name="Kuhara S."/>
            <person name="Shiba T."/>
            <person name="Hattori M."/>
            <person name="Shinagawa H."/>
        </authorList>
    </citation>
    <scope>NUCLEOTIDE SEQUENCE [LARGE SCALE GENOMIC DNA]</scope>
    <source>
        <strain>O157:H7 / Sakai / RIMD 0509952 / EHEC</strain>
    </source>
</reference>
<organism>
    <name type="scientific">Escherichia coli O157:H7</name>
    <dbReference type="NCBI Taxonomy" id="83334"/>
    <lineage>
        <taxon>Bacteria</taxon>
        <taxon>Pseudomonadati</taxon>
        <taxon>Pseudomonadota</taxon>
        <taxon>Gammaproteobacteria</taxon>
        <taxon>Enterobacterales</taxon>
        <taxon>Enterobacteriaceae</taxon>
        <taxon>Escherichia</taxon>
    </lineage>
</organism>
<name>ECNA_ECO57</name>